<dbReference type="EMBL" id="AM180355">
    <property type="protein sequence ID" value="CAJ68458.1"/>
    <property type="molecule type" value="Genomic_DNA"/>
</dbReference>
<dbReference type="RefSeq" id="WP_009896752.1">
    <property type="nucleotide sequence ID" value="NZ_JAUPES010000013.1"/>
</dbReference>
<dbReference type="RefSeq" id="YP_001088094.1">
    <property type="nucleotide sequence ID" value="NC_009089.1"/>
</dbReference>
<dbReference type="SMR" id="Q186E8"/>
<dbReference type="STRING" id="272563.CD630_15930"/>
<dbReference type="EnsemblBacteria" id="CAJ68458">
    <property type="protein sequence ID" value="CAJ68458"/>
    <property type="gene ID" value="CD630_15930"/>
</dbReference>
<dbReference type="KEGG" id="cdf:CD630_15930"/>
<dbReference type="KEGG" id="pdc:CDIF630_01766"/>
<dbReference type="PATRIC" id="fig|272563.120.peg.1668"/>
<dbReference type="eggNOG" id="COG2156">
    <property type="taxonomic scope" value="Bacteria"/>
</dbReference>
<dbReference type="OrthoDB" id="9809491at2"/>
<dbReference type="PhylomeDB" id="Q186E8"/>
<dbReference type="BioCyc" id="PDIF272563:G12WB-1731-MONOMER"/>
<dbReference type="Proteomes" id="UP000001978">
    <property type="component" value="Chromosome"/>
</dbReference>
<dbReference type="GO" id="GO:0005886">
    <property type="term" value="C:plasma membrane"/>
    <property type="evidence" value="ECO:0007669"/>
    <property type="project" value="UniProtKB-SubCell"/>
</dbReference>
<dbReference type="GO" id="GO:0005524">
    <property type="term" value="F:ATP binding"/>
    <property type="evidence" value="ECO:0007669"/>
    <property type="project" value="UniProtKB-UniRule"/>
</dbReference>
<dbReference type="GO" id="GO:0008556">
    <property type="term" value="F:P-type potassium transmembrane transporter activity"/>
    <property type="evidence" value="ECO:0007669"/>
    <property type="project" value="InterPro"/>
</dbReference>
<dbReference type="HAMAP" id="MF_00276">
    <property type="entry name" value="KdpC"/>
    <property type="match status" value="1"/>
</dbReference>
<dbReference type="InterPro" id="IPR003820">
    <property type="entry name" value="KdpC"/>
</dbReference>
<dbReference type="NCBIfam" id="TIGR00681">
    <property type="entry name" value="kdpC"/>
    <property type="match status" value="1"/>
</dbReference>
<dbReference type="NCBIfam" id="NF010600">
    <property type="entry name" value="PRK13995.1"/>
    <property type="match status" value="1"/>
</dbReference>
<dbReference type="PANTHER" id="PTHR30042">
    <property type="entry name" value="POTASSIUM-TRANSPORTING ATPASE C CHAIN"/>
    <property type="match status" value="1"/>
</dbReference>
<dbReference type="PANTHER" id="PTHR30042:SF2">
    <property type="entry name" value="POTASSIUM-TRANSPORTING ATPASE KDPC SUBUNIT"/>
    <property type="match status" value="1"/>
</dbReference>
<dbReference type="Pfam" id="PF02669">
    <property type="entry name" value="KdpC"/>
    <property type="match status" value="1"/>
</dbReference>
<dbReference type="PIRSF" id="PIRSF001296">
    <property type="entry name" value="K_ATPase_KdpC"/>
    <property type="match status" value="1"/>
</dbReference>
<reference key="1">
    <citation type="journal article" date="2006" name="Nat. Genet.">
        <title>The multidrug-resistant human pathogen Clostridium difficile has a highly mobile, mosaic genome.</title>
        <authorList>
            <person name="Sebaihia M."/>
            <person name="Wren B.W."/>
            <person name="Mullany P."/>
            <person name="Fairweather N.F."/>
            <person name="Minton N."/>
            <person name="Stabler R."/>
            <person name="Thomson N.R."/>
            <person name="Roberts A.P."/>
            <person name="Cerdeno-Tarraga A.M."/>
            <person name="Wang H."/>
            <person name="Holden M.T.G."/>
            <person name="Wright A."/>
            <person name="Churcher C."/>
            <person name="Quail M.A."/>
            <person name="Baker S."/>
            <person name="Bason N."/>
            <person name="Brooks K."/>
            <person name="Chillingworth T."/>
            <person name="Cronin A."/>
            <person name="Davis P."/>
            <person name="Dowd L."/>
            <person name="Fraser A."/>
            <person name="Feltwell T."/>
            <person name="Hance Z."/>
            <person name="Holroyd S."/>
            <person name="Jagels K."/>
            <person name="Moule S."/>
            <person name="Mungall K."/>
            <person name="Price C."/>
            <person name="Rabbinowitsch E."/>
            <person name="Sharp S."/>
            <person name="Simmonds M."/>
            <person name="Stevens K."/>
            <person name="Unwin L."/>
            <person name="Whithead S."/>
            <person name="Dupuy B."/>
            <person name="Dougan G."/>
            <person name="Barrell B."/>
            <person name="Parkhill J."/>
        </authorList>
    </citation>
    <scope>NUCLEOTIDE SEQUENCE [LARGE SCALE GENOMIC DNA]</scope>
    <source>
        <strain>630</strain>
    </source>
</reference>
<proteinExistence type="inferred from homology"/>
<comment type="function">
    <text evidence="1">Part of the high-affinity ATP-driven potassium transport (or Kdp) system, which catalyzes the hydrolysis of ATP coupled with the electrogenic transport of potassium into the cytoplasm. This subunit acts as a catalytic chaperone that increases the ATP-binding affinity of the ATP-hydrolyzing subunit KdpB by the formation of a transient KdpB/KdpC/ATP ternary complex.</text>
</comment>
<comment type="subunit">
    <text evidence="1">The system is composed of three essential subunits: KdpA, KdpB and KdpC.</text>
</comment>
<comment type="subcellular location">
    <subcellularLocation>
        <location evidence="1">Cell membrane</location>
        <topology evidence="1">Single-pass membrane protein</topology>
    </subcellularLocation>
</comment>
<comment type="similarity">
    <text evidence="1">Belongs to the KdpC family.</text>
</comment>
<sequence length="208" mass="22242">MKTLKPALLVSIVLLVVCGLVYPLVLTGVSQVAFKDKANGSMIEVNGVKVGSELIGQSFTDARFFKGRVSSVNYNTYTKEDLVPDKDGNTSYGGVSSGSFNYGATNPELHDRVQKDIEKFLKDNPTVKREDIPTDLLTASGSGLDPNISPASAKIQIPAIAKASGISESKLQKIVDDNTSKKLFGVLGEDRVNVLKVNVEVAKILGLI</sequence>
<evidence type="ECO:0000255" key="1">
    <source>
        <dbReference type="HAMAP-Rule" id="MF_00276"/>
    </source>
</evidence>
<protein>
    <recommendedName>
        <fullName evidence="1">Potassium-transporting ATPase KdpC subunit</fullName>
    </recommendedName>
    <alternativeName>
        <fullName evidence="1">ATP phosphohydrolase [potassium-transporting] C chain</fullName>
    </alternativeName>
    <alternativeName>
        <fullName evidence="1">Potassium-binding and translocating subunit C</fullName>
    </alternativeName>
    <alternativeName>
        <fullName evidence="1">Potassium-translocating ATPase C chain</fullName>
    </alternativeName>
</protein>
<organism>
    <name type="scientific">Clostridioides difficile (strain 630)</name>
    <name type="common">Peptoclostridium difficile</name>
    <dbReference type="NCBI Taxonomy" id="272563"/>
    <lineage>
        <taxon>Bacteria</taxon>
        <taxon>Bacillati</taxon>
        <taxon>Bacillota</taxon>
        <taxon>Clostridia</taxon>
        <taxon>Peptostreptococcales</taxon>
        <taxon>Peptostreptococcaceae</taxon>
        <taxon>Clostridioides</taxon>
    </lineage>
</organism>
<name>KDPC_CLOD6</name>
<keyword id="KW-0067">ATP-binding</keyword>
<keyword id="KW-1003">Cell membrane</keyword>
<keyword id="KW-0406">Ion transport</keyword>
<keyword id="KW-0472">Membrane</keyword>
<keyword id="KW-0547">Nucleotide-binding</keyword>
<keyword id="KW-0630">Potassium</keyword>
<keyword id="KW-0633">Potassium transport</keyword>
<keyword id="KW-1185">Reference proteome</keyword>
<keyword id="KW-0812">Transmembrane</keyword>
<keyword id="KW-1133">Transmembrane helix</keyword>
<keyword id="KW-0813">Transport</keyword>
<feature type="chain" id="PRO_1000022280" description="Potassium-transporting ATPase KdpC subunit">
    <location>
        <begin position="1"/>
        <end position="208"/>
    </location>
</feature>
<feature type="transmembrane region" description="Helical" evidence="1">
    <location>
        <begin position="6"/>
        <end position="26"/>
    </location>
</feature>
<accession>Q186E8</accession>
<gene>
    <name evidence="1" type="primary">kdpC</name>
    <name type="ordered locus">CD630_15930</name>
</gene>